<feature type="chain" id="PRO_0000354940" description="Catalase-peroxidase">
    <location>
        <begin position="1"/>
        <end position="725"/>
    </location>
</feature>
<feature type="active site" description="Proton acceptor" evidence="1">
    <location>
        <position position="89"/>
    </location>
</feature>
<feature type="binding site" description="axial binding residue" evidence="1">
    <location>
        <position position="252"/>
    </location>
    <ligand>
        <name>heme b</name>
        <dbReference type="ChEBI" id="CHEBI:60344"/>
    </ligand>
    <ligandPart>
        <name>Fe</name>
        <dbReference type="ChEBI" id="CHEBI:18248"/>
    </ligandPart>
</feature>
<feature type="site" description="Transition state stabilizer" evidence="1">
    <location>
        <position position="85"/>
    </location>
</feature>
<feature type="cross-link" description="Tryptophyl-tyrosyl-methioninium (Trp-Tyr) (with M-237)" evidence="1">
    <location>
        <begin position="88"/>
        <end position="211"/>
    </location>
</feature>
<feature type="cross-link" description="Tryptophyl-tyrosyl-methioninium (Tyr-Met) (with W-88)" evidence="1">
    <location>
        <begin position="211"/>
        <end position="237"/>
    </location>
</feature>
<reference key="1">
    <citation type="journal article" date="2004" name="Nucleic Acids Res.">
        <title>Genome sequence of Symbiobacterium thermophilum, an uncultivable bacterium that depends on microbial commensalism.</title>
        <authorList>
            <person name="Ueda K."/>
            <person name="Yamashita A."/>
            <person name="Ishikawa J."/>
            <person name="Shimada M."/>
            <person name="Watsuji T."/>
            <person name="Morimura K."/>
            <person name="Ikeda H."/>
            <person name="Hattori M."/>
            <person name="Beppu T."/>
        </authorList>
    </citation>
    <scope>NUCLEOTIDE SEQUENCE [LARGE SCALE GENOMIC DNA]</scope>
    <source>
        <strain>DSM 24528 / JCM 14929 / IAM 14863 / T</strain>
    </source>
</reference>
<protein>
    <recommendedName>
        <fullName evidence="1">Catalase-peroxidase</fullName>
        <shortName evidence="1">CP</shortName>
        <ecNumber evidence="1">1.11.1.21</ecNumber>
    </recommendedName>
    <alternativeName>
        <fullName evidence="1">Peroxidase/catalase</fullName>
    </alternativeName>
</protein>
<keyword id="KW-0349">Heme</keyword>
<keyword id="KW-0376">Hydrogen peroxide</keyword>
<keyword id="KW-0408">Iron</keyword>
<keyword id="KW-0479">Metal-binding</keyword>
<keyword id="KW-0560">Oxidoreductase</keyword>
<keyword id="KW-0575">Peroxidase</keyword>
<keyword id="KW-1185">Reference proteome</keyword>
<evidence type="ECO:0000255" key="1">
    <source>
        <dbReference type="HAMAP-Rule" id="MF_01961"/>
    </source>
</evidence>
<comment type="function">
    <text evidence="1">Bifunctional enzyme with both catalase and broad-spectrum peroxidase activity.</text>
</comment>
<comment type="catalytic activity">
    <reaction evidence="1">
        <text>H2O2 + AH2 = A + 2 H2O</text>
        <dbReference type="Rhea" id="RHEA:30275"/>
        <dbReference type="ChEBI" id="CHEBI:13193"/>
        <dbReference type="ChEBI" id="CHEBI:15377"/>
        <dbReference type="ChEBI" id="CHEBI:16240"/>
        <dbReference type="ChEBI" id="CHEBI:17499"/>
        <dbReference type="EC" id="1.11.1.21"/>
    </reaction>
</comment>
<comment type="catalytic activity">
    <reaction evidence="1">
        <text>2 H2O2 = O2 + 2 H2O</text>
        <dbReference type="Rhea" id="RHEA:20309"/>
        <dbReference type="ChEBI" id="CHEBI:15377"/>
        <dbReference type="ChEBI" id="CHEBI:15379"/>
        <dbReference type="ChEBI" id="CHEBI:16240"/>
        <dbReference type="EC" id="1.11.1.21"/>
    </reaction>
</comment>
<comment type="cofactor">
    <cofactor evidence="1">
        <name>heme b</name>
        <dbReference type="ChEBI" id="CHEBI:60344"/>
    </cofactor>
    <text evidence="1">Binds 1 heme b (iron(II)-protoporphyrin IX) group per dimer.</text>
</comment>
<comment type="subunit">
    <text evidence="1">Homodimer or homotetramer.</text>
</comment>
<comment type="PTM">
    <text evidence="1">Formation of the three residue Trp-Tyr-Met cross-link is important for the catalase, but not the peroxidase activity of the enzyme.</text>
</comment>
<comment type="similarity">
    <text evidence="1">Belongs to the peroxidase family. Peroxidase/catalase subfamily.</text>
</comment>
<sequence length="725" mass="81957">MREEDIRSTAGHGTSNKDWWPNQLNLRILHQHSEKANPMGPDFNYREEFKKLDYWALKEDLRKLMTESQDWWPADFGHYGPLIIRMAWHSAGTYRIQDGRGGAESGAQRFAPLNSWPDNINLDKARRLLWPIKQKYGRRISWADLMILAGNVALESMGLKTIGFAGGRADVWEPEEDIYWGSEQQWLGRDRFGEEGKLEDPLAASEMGLIYVNPEGPGREPDPLKAAQQIRETFKRMGMNDEETVALIAGGHTFGKTHGAASPSHLGPEPEAAPIEEMGLGWKNSYGTGKGGDTITSGLEVTWTSSPTKWTSNFLWNLFGYEWELTKSPAGAWQWRPKNGAGEGTVPDAHDPNKRHAPGMLTTDIALRVDPVYEKIARRFLENPDEFAKAFARAWFKLTHRDLGPRSRYLGPEVPEEEFIWQDPLPKRDYDLIDEGDIAELKKRIQASGMSIREMVMTAWASASTFRGSDKRGGANGARIRLAPQIGWEVNEPEQLRPVLETLEGIQQEFNRSQTGRKRVSLADLIVLAGCVGIEQAARNAGFEITVPFTPGRVDATQEQTDVESFSYLEPVHDGFRNYLKRKFSVPAEHLLIDRANLLTLTAPEMTVLIGGLRVLDCNWGRTKHGVLTDRPGALTNDFFVNLLDMRWKWNATDDENVFEGRDRATGELKWTATRVDLIFGSNAQLRAIAEVYASNDGQEKFVQDFVKAWTKVMNLDRFDLLVKK</sequence>
<gene>
    <name evidence="1" type="primary">katG</name>
    <name type="ordered locus">STH2416</name>
</gene>
<proteinExistence type="inferred from homology"/>
<organism>
    <name type="scientific">Symbiobacterium thermophilum (strain DSM 24528 / JCM 14929 / IAM 14863 / T)</name>
    <dbReference type="NCBI Taxonomy" id="292459"/>
    <lineage>
        <taxon>Bacteria</taxon>
        <taxon>Bacillati</taxon>
        <taxon>Bacillota</taxon>
        <taxon>Clostridia</taxon>
        <taxon>Eubacteriales</taxon>
        <taxon>Symbiobacteriaceae</taxon>
        <taxon>Symbiobacterium</taxon>
    </lineage>
</organism>
<dbReference type="EC" id="1.11.1.21" evidence="1"/>
<dbReference type="EMBL" id="AP006840">
    <property type="protein sequence ID" value="BAD41401.1"/>
    <property type="molecule type" value="Genomic_DNA"/>
</dbReference>
<dbReference type="RefSeq" id="WP_011196539.1">
    <property type="nucleotide sequence ID" value="NC_006177.1"/>
</dbReference>
<dbReference type="SMR" id="Q67LP5"/>
<dbReference type="STRING" id="292459.STH2416"/>
<dbReference type="PeroxiBase" id="2350">
    <property type="entry name" value="SthCP01_IAM14863"/>
</dbReference>
<dbReference type="KEGG" id="sth:STH2416"/>
<dbReference type="eggNOG" id="COG0376">
    <property type="taxonomic scope" value="Bacteria"/>
</dbReference>
<dbReference type="HOGENOM" id="CLU_025424_2_0_9"/>
<dbReference type="OrthoDB" id="9759743at2"/>
<dbReference type="Proteomes" id="UP000000417">
    <property type="component" value="Chromosome"/>
</dbReference>
<dbReference type="GO" id="GO:0005829">
    <property type="term" value="C:cytosol"/>
    <property type="evidence" value="ECO:0007669"/>
    <property type="project" value="TreeGrafter"/>
</dbReference>
<dbReference type="GO" id="GO:0004096">
    <property type="term" value="F:catalase activity"/>
    <property type="evidence" value="ECO:0007669"/>
    <property type="project" value="UniProtKB-UniRule"/>
</dbReference>
<dbReference type="GO" id="GO:0020037">
    <property type="term" value="F:heme binding"/>
    <property type="evidence" value="ECO:0007669"/>
    <property type="project" value="InterPro"/>
</dbReference>
<dbReference type="GO" id="GO:0046872">
    <property type="term" value="F:metal ion binding"/>
    <property type="evidence" value="ECO:0007669"/>
    <property type="project" value="UniProtKB-KW"/>
</dbReference>
<dbReference type="GO" id="GO:0070301">
    <property type="term" value="P:cellular response to hydrogen peroxide"/>
    <property type="evidence" value="ECO:0007669"/>
    <property type="project" value="TreeGrafter"/>
</dbReference>
<dbReference type="GO" id="GO:0042744">
    <property type="term" value="P:hydrogen peroxide catabolic process"/>
    <property type="evidence" value="ECO:0007669"/>
    <property type="project" value="UniProtKB-KW"/>
</dbReference>
<dbReference type="CDD" id="cd00649">
    <property type="entry name" value="catalase_peroxidase_1"/>
    <property type="match status" value="1"/>
</dbReference>
<dbReference type="CDD" id="cd08200">
    <property type="entry name" value="catalase_peroxidase_2"/>
    <property type="match status" value="1"/>
</dbReference>
<dbReference type="FunFam" id="1.10.420.10:FF:000002">
    <property type="entry name" value="Catalase-peroxidase"/>
    <property type="match status" value="1"/>
</dbReference>
<dbReference type="FunFam" id="1.10.420.10:FF:000004">
    <property type="entry name" value="Catalase-peroxidase"/>
    <property type="match status" value="1"/>
</dbReference>
<dbReference type="FunFam" id="1.10.520.10:FF:000002">
    <property type="entry name" value="Catalase-peroxidase"/>
    <property type="match status" value="1"/>
</dbReference>
<dbReference type="Gene3D" id="1.10.520.10">
    <property type="match status" value="2"/>
</dbReference>
<dbReference type="Gene3D" id="1.10.420.10">
    <property type="entry name" value="Peroxidase, domain 2"/>
    <property type="match status" value="2"/>
</dbReference>
<dbReference type="HAMAP" id="MF_01961">
    <property type="entry name" value="Catal_peroxid"/>
    <property type="match status" value="1"/>
</dbReference>
<dbReference type="InterPro" id="IPR000763">
    <property type="entry name" value="Catalase_peroxidase"/>
</dbReference>
<dbReference type="InterPro" id="IPR002016">
    <property type="entry name" value="Haem_peroxidase"/>
</dbReference>
<dbReference type="InterPro" id="IPR010255">
    <property type="entry name" value="Haem_peroxidase_sf"/>
</dbReference>
<dbReference type="InterPro" id="IPR019794">
    <property type="entry name" value="Peroxidases_AS"/>
</dbReference>
<dbReference type="InterPro" id="IPR019793">
    <property type="entry name" value="Peroxidases_heam-ligand_BS"/>
</dbReference>
<dbReference type="NCBIfam" id="TIGR00198">
    <property type="entry name" value="cat_per_HPI"/>
    <property type="match status" value="1"/>
</dbReference>
<dbReference type="NCBIfam" id="NF011635">
    <property type="entry name" value="PRK15061.1"/>
    <property type="match status" value="1"/>
</dbReference>
<dbReference type="PANTHER" id="PTHR30555:SF0">
    <property type="entry name" value="CATALASE-PEROXIDASE"/>
    <property type="match status" value="1"/>
</dbReference>
<dbReference type="PANTHER" id="PTHR30555">
    <property type="entry name" value="HYDROPEROXIDASE I, BIFUNCTIONAL CATALASE-PEROXIDASE"/>
    <property type="match status" value="1"/>
</dbReference>
<dbReference type="Pfam" id="PF00141">
    <property type="entry name" value="peroxidase"/>
    <property type="match status" value="2"/>
</dbReference>
<dbReference type="PRINTS" id="PR00460">
    <property type="entry name" value="BPEROXIDASE"/>
</dbReference>
<dbReference type="PRINTS" id="PR00458">
    <property type="entry name" value="PEROXIDASE"/>
</dbReference>
<dbReference type="SUPFAM" id="SSF48113">
    <property type="entry name" value="Heme-dependent peroxidases"/>
    <property type="match status" value="2"/>
</dbReference>
<dbReference type="PROSITE" id="PS00435">
    <property type="entry name" value="PEROXIDASE_1"/>
    <property type="match status" value="1"/>
</dbReference>
<dbReference type="PROSITE" id="PS00436">
    <property type="entry name" value="PEROXIDASE_2"/>
    <property type="match status" value="1"/>
</dbReference>
<dbReference type="PROSITE" id="PS50873">
    <property type="entry name" value="PEROXIDASE_4"/>
    <property type="match status" value="1"/>
</dbReference>
<name>KATG_SYMTH</name>
<accession>Q67LP5</accession>